<organism>
    <name type="scientific">Xanthomonas campestris pv. campestris (strain B100)</name>
    <dbReference type="NCBI Taxonomy" id="509169"/>
    <lineage>
        <taxon>Bacteria</taxon>
        <taxon>Pseudomonadati</taxon>
        <taxon>Pseudomonadota</taxon>
        <taxon>Gammaproteobacteria</taxon>
        <taxon>Lysobacterales</taxon>
        <taxon>Lysobacteraceae</taxon>
        <taxon>Xanthomonas</taxon>
    </lineage>
</organism>
<keyword id="KW-0028">Amino-acid biosynthesis</keyword>
<keyword id="KW-0963">Cytoplasm</keyword>
<keyword id="KW-0368">Histidine biosynthesis</keyword>
<keyword id="KW-0378">Hydrolase</keyword>
<keyword id="KW-0456">Lyase</keyword>
<keyword id="KW-0460">Magnesium</keyword>
<keyword id="KW-0479">Metal-binding</keyword>
<keyword id="KW-0511">Multifunctional enzyme</keyword>
<proteinExistence type="inferred from homology"/>
<accession>B0RSL6</accession>
<reference key="1">
    <citation type="journal article" date="2008" name="J. Biotechnol.">
        <title>The genome of Xanthomonas campestris pv. campestris B100 and its use for the reconstruction of metabolic pathways involved in xanthan biosynthesis.</title>
        <authorList>
            <person name="Vorhoelter F.-J."/>
            <person name="Schneiker S."/>
            <person name="Goesmann A."/>
            <person name="Krause L."/>
            <person name="Bekel T."/>
            <person name="Kaiser O."/>
            <person name="Linke B."/>
            <person name="Patschkowski T."/>
            <person name="Rueckert C."/>
            <person name="Schmid J."/>
            <person name="Sidhu V.K."/>
            <person name="Sieber V."/>
            <person name="Tauch A."/>
            <person name="Watt S.A."/>
            <person name="Weisshaar B."/>
            <person name="Becker A."/>
            <person name="Niehaus K."/>
            <person name="Puehler A."/>
        </authorList>
    </citation>
    <scope>NUCLEOTIDE SEQUENCE [LARGE SCALE GENOMIC DNA]</scope>
    <source>
        <strain>B100</strain>
    </source>
</reference>
<sequence length="375" mass="41780">MTPILFVDRDGTLITEPADFQIDAYEKLRFVEGVIPAMLKLRDAGYQFVIVSNQDGLGSESYPQASFDGPNNLMLQIFASQGIVFREVLIDCSWPADNAPTRKPGVGLMVPYLQDRTIDWSRSAMVGDRITDIQFAQNLNIRGFQLRTEQFGGDWDWAGIAHELADAPRRAVVQRNTKETRIRVELDLDRVAEPHTATGLPFFDHMLEQIGKHGGFALDIRAEGDLHIDEHHTIEDTGLALGQALREALGDKRGIGRYGFDPVDSPWRVAGDTAQHGFTLPMDETIASAALDFSGRPYFVFDGDFKRERVGDMPTELVPHFFRSVCDASGLNLHLHVRGENDHHKVEGCFKALARALRQAIRREGTALPSTKGAL</sequence>
<gene>
    <name evidence="1" type="primary">hisB</name>
    <name type="ordered locus">xcc-b100_2098</name>
</gene>
<protein>
    <recommendedName>
        <fullName evidence="1">Histidine biosynthesis bifunctional protein HisB</fullName>
    </recommendedName>
    <domain>
        <recommendedName>
            <fullName evidence="1">Histidinol-phosphatase</fullName>
            <ecNumber evidence="1">3.1.3.15</ecNumber>
        </recommendedName>
    </domain>
    <domain>
        <recommendedName>
            <fullName evidence="1">Imidazoleglycerol-phosphate dehydratase</fullName>
            <shortName evidence="1">IGPD</shortName>
            <ecNumber evidence="1">4.2.1.19</ecNumber>
        </recommendedName>
    </domain>
</protein>
<dbReference type="EC" id="3.1.3.15" evidence="1"/>
<dbReference type="EC" id="4.2.1.19" evidence="1"/>
<dbReference type="EMBL" id="AM920689">
    <property type="protein sequence ID" value="CAP51451.1"/>
    <property type="molecule type" value="Genomic_DNA"/>
</dbReference>
<dbReference type="SMR" id="B0RSL6"/>
<dbReference type="KEGG" id="xca:xcc-b100_2098"/>
<dbReference type="HOGENOM" id="CLU_044308_0_0_6"/>
<dbReference type="UniPathway" id="UPA00031">
    <property type="reaction ID" value="UER00011"/>
</dbReference>
<dbReference type="UniPathway" id="UPA00031">
    <property type="reaction ID" value="UER00013"/>
</dbReference>
<dbReference type="Proteomes" id="UP000001188">
    <property type="component" value="Chromosome"/>
</dbReference>
<dbReference type="GO" id="GO:0005737">
    <property type="term" value="C:cytoplasm"/>
    <property type="evidence" value="ECO:0007669"/>
    <property type="project" value="UniProtKB-SubCell"/>
</dbReference>
<dbReference type="GO" id="GO:0004401">
    <property type="term" value="F:histidinol-phosphatase activity"/>
    <property type="evidence" value="ECO:0007669"/>
    <property type="project" value="UniProtKB-UniRule"/>
</dbReference>
<dbReference type="GO" id="GO:0004424">
    <property type="term" value="F:imidazoleglycerol-phosphate dehydratase activity"/>
    <property type="evidence" value="ECO:0007669"/>
    <property type="project" value="UniProtKB-UniRule"/>
</dbReference>
<dbReference type="GO" id="GO:0046872">
    <property type="term" value="F:metal ion binding"/>
    <property type="evidence" value="ECO:0007669"/>
    <property type="project" value="UniProtKB-KW"/>
</dbReference>
<dbReference type="GO" id="GO:0000105">
    <property type="term" value="P:L-histidine biosynthetic process"/>
    <property type="evidence" value="ECO:0007669"/>
    <property type="project" value="UniProtKB-UniRule"/>
</dbReference>
<dbReference type="CDD" id="cd07914">
    <property type="entry name" value="IGPD"/>
    <property type="match status" value="1"/>
</dbReference>
<dbReference type="FunFam" id="3.30.230.40:FF:000001">
    <property type="entry name" value="Imidazoleglycerol-phosphate dehydratase HisB"/>
    <property type="match status" value="1"/>
</dbReference>
<dbReference type="FunFam" id="3.30.230.40:FF:000003">
    <property type="entry name" value="Imidazoleglycerol-phosphate dehydratase HisB"/>
    <property type="match status" value="1"/>
</dbReference>
<dbReference type="Gene3D" id="3.40.50.1000">
    <property type="entry name" value="HAD superfamily/HAD-like"/>
    <property type="match status" value="1"/>
</dbReference>
<dbReference type="Gene3D" id="3.30.230.40">
    <property type="entry name" value="Imidazole glycerol phosphate dehydratase, domain 1"/>
    <property type="match status" value="2"/>
</dbReference>
<dbReference type="HAMAP" id="MF_01022">
    <property type="entry name" value="Bifunc_HisB"/>
    <property type="match status" value="1"/>
</dbReference>
<dbReference type="HAMAP" id="MF_00076">
    <property type="entry name" value="HisB"/>
    <property type="match status" value="1"/>
</dbReference>
<dbReference type="InterPro" id="IPR036412">
    <property type="entry name" value="HAD-like_sf"/>
</dbReference>
<dbReference type="InterPro" id="IPR006549">
    <property type="entry name" value="HAD-SF_hydro_IIIA"/>
</dbReference>
<dbReference type="InterPro" id="IPR023214">
    <property type="entry name" value="HAD_sf"/>
</dbReference>
<dbReference type="InterPro" id="IPR020566">
    <property type="entry name" value="His_synth_bifunc_HisB"/>
</dbReference>
<dbReference type="InterPro" id="IPR005954">
    <property type="entry name" value="HisB_N"/>
</dbReference>
<dbReference type="InterPro" id="IPR006543">
    <property type="entry name" value="Histidinol-phos"/>
</dbReference>
<dbReference type="InterPro" id="IPR038494">
    <property type="entry name" value="IGPD_sf"/>
</dbReference>
<dbReference type="InterPro" id="IPR000807">
    <property type="entry name" value="ImidazoleglycerolP_deHydtase"/>
</dbReference>
<dbReference type="InterPro" id="IPR020565">
    <property type="entry name" value="ImidazoleglycerP_deHydtase_CS"/>
</dbReference>
<dbReference type="InterPro" id="IPR020568">
    <property type="entry name" value="Ribosomal_Su5_D2-typ_SF"/>
</dbReference>
<dbReference type="NCBIfam" id="TIGR01662">
    <property type="entry name" value="HAD-SF-IIIA"/>
    <property type="match status" value="1"/>
</dbReference>
<dbReference type="NCBIfam" id="TIGR01261">
    <property type="entry name" value="hisB_Nterm"/>
    <property type="match status" value="1"/>
</dbReference>
<dbReference type="NCBIfam" id="TIGR01656">
    <property type="entry name" value="Histidinol-ppas"/>
    <property type="match status" value="1"/>
</dbReference>
<dbReference type="NCBIfam" id="NF002111">
    <property type="entry name" value="PRK00951.2-1"/>
    <property type="match status" value="1"/>
</dbReference>
<dbReference type="NCBIfam" id="NF003937">
    <property type="entry name" value="PRK05446.1"/>
    <property type="match status" value="1"/>
</dbReference>
<dbReference type="PANTHER" id="PTHR23133:SF2">
    <property type="entry name" value="IMIDAZOLEGLYCEROL-PHOSPHATE DEHYDRATASE"/>
    <property type="match status" value="1"/>
</dbReference>
<dbReference type="PANTHER" id="PTHR23133">
    <property type="entry name" value="IMIDAZOLEGLYCEROL-PHOSPHATE DEHYDRATASE HIS7"/>
    <property type="match status" value="1"/>
</dbReference>
<dbReference type="Pfam" id="PF13242">
    <property type="entry name" value="Hydrolase_like"/>
    <property type="match status" value="1"/>
</dbReference>
<dbReference type="Pfam" id="PF00475">
    <property type="entry name" value="IGPD"/>
    <property type="match status" value="1"/>
</dbReference>
<dbReference type="SUPFAM" id="SSF56784">
    <property type="entry name" value="HAD-like"/>
    <property type="match status" value="1"/>
</dbReference>
<dbReference type="SUPFAM" id="SSF54211">
    <property type="entry name" value="Ribosomal protein S5 domain 2-like"/>
    <property type="match status" value="2"/>
</dbReference>
<dbReference type="PROSITE" id="PS00954">
    <property type="entry name" value="IGP_DEHYDRATASE_1"/>
    <property type="match status" value="1"/>
</dbReference>
<dbReference type="PROSITE" id="PS00955">
    <property type="entry name" value="IGP_DEHYDRATASE_2"/>
    <property type="match status" value="1"/>
</dbReference>
<name>HIS7_XANCB</name>
<comment type="catalytic activity">
    <reaction evidence="1">
        <text>D-erythro-1-(imidazol-4-yl)glycerol 3-phosphate = 3-(imidazol-4-yl)-2-oxopropyl phosphate + H2O</text>
        <dbReference type="Rhea" id="RHEA:11040"/>
        <dbReference type="ChEBI" id="CHEBI:15377"/>
        <dbReference type="ChEBI" id="CHEBI:57766"/>
        <dbReference type="ChEBI" id="CHEBI:58278"/>
        <dbReference type="EC" id="4.2.1.19"/>
    </reaction>
</comment>
<comment type="catalytic activity">
    <reaction evidence="1">
        <text>L-histidinol phosphate + H2O = L-histidinol + phosphate</text>
        <dbReference type="Rhea" id="RHEA:14465"/>
        <dbReference type="ChEBI" id="CHEBI:15377"/>
        <dbReference type="ChEBI" id="CHEBI:43474"/>
        <dbReference type="ChEBI" id="CHEBI:57699"/>
        <dbReference type="ChEBI" id="CHEBI:57980"/>
        <dbReference type="EC" id="3.1.3.15"/>
    </reaction>
</comment>
<comment type="cofactor">
    <cofactor evidence="1">
        <name>Mg(2+)</name>
        <dbReference type="ChEBI" id="CHEBI:18420"/>
    </cofactor>
</comment>
<comment type="pathway">
    <text evidence="1">Amino-acid biosynthesis; L-histidine biosynthesis; L-histidine from 5-phospho-alpha-D-ribose 1-diphosphate: step 6/9.</text>
</comment>
<comment type="pathway">
    <text evidence="1">Amino-acid biosynthesis; L-histidine biosynthesis; L-histidine from 5-phospho-alpha-D-ribose 1-diphosphate: step 8/9.</text>
</comment>
<comment type="subcellular location">
    <subcellularLocation>
        <location evidence="1">Cytoplasm</location>
    </subcellularLocation>
</comment>
<comment type="similarity">
    <text evidence="1">In the N-terminal section; belongs to the histidinol-phosphatase family.</text>
</comment>
<comment type="similarity">
    <text evidence="1">In the C-terminal section; belongs to the imidazoleglycerol-phosphate dehydratase family.</text>
</comment>
<evidence type="ECO:0000255" key="1">
    <source>
        <dbReference type="HAMAP-Rule" id="MF_01022"/>
    </source>
</evidence>
<feature type="chain" id="PRO_1000135372" description="Histidine biosynthesis bifunctional protein HisB">
    <location>
        <begin position="1"/>
        <end position="375"/>
    </location>
</feature>
<feature type="region of interest" description="Histidinol-phosphatase" evidence="1">
    <location>
        <begin position="1"/>
        <end position="168"/>
    </location>
</feature>
<feature type="region of interest" description="Imidazoleglycerol-phosphate dehydratase" evidence="1">
    <location>
        <begin position="169"/>
        <end position="375"/>
    </location>
</feature>
<feature type="active site" description="Nucleophile" evidence="1">
    <location>
        <position position="8"/>
    </location>
</feature>
<feature type="active site" description="Proton donor" evidence="1">
    <location>
        <position position="10"/>
    </location>
</feature>
<feature type="binding site" evidence="1">
    <location>
        <position position="8"/>
    </location>
    <ligand>
        <name>Mg(2+)</name>
        <dbReference type="ChEBI" id="CHEBI:18420"/>
    </ligand>
</feature>
<feature type="binding site" evidence="1">
    <location>
        <position position="10"/>
    </location>
    <ligand>
        <name>Mg(2+)</name>
        <dbReference type="ChEBI" id="CHEBI:18420"/>
    </ligand>
</feature>
<feature type="binding site" evidence="1">
    <location>
        <position position="128"/>
    </location>
    <ligand>
        <name>Mg(2+)</name>
        <dbReference type="ChEBI" id="CHEBI:18420"/>
    </ligand>
</feature>